<gene>
    <name type="primary">TAT</name>
</gene>
<feature type="chain" id="PRO_0000247537" description="Tyrosine aminotransferase">
    <location>
        <begin position="1"/>
        <end position="447"/>
    </location>
</feature>
<feature type="modified residue" description="N6-(pyridoxal phosphate)lysine" evidence="1">
    <location>
        <position position="273"/>
    </location>
</feature>
<feature type="modified residue" description="Phosphoserine" evidence="2">
    <location>
        <position position="441"/>
    </location>
</feature>
<dbReference type="EC" id="2.6.1.5"/>
<dbReference type="EMBL" id="BT021798">
    <property type="protein sequence ID" value="AAX46645.1"/>
    <property type="molecule type" value="mRNA"/>
</dbReference>
<dbReference type="RefSeq" id="NP_001029762.1">
    <property type="nucleotide sequence ID" value="NM_001034590.1"/>
</dbReference>
<dbReference type="SMR" id="Q58CZ9"/>
<dbReference type="FunCoup" id="Q58CZ9">
    <property type="interactions" value="127"/>
</dbReference>
<dbReference type="STRING" id="9913.ENSBTAP00000070239"/>
<dbReference type="PaxDb" id="9913-ENSBTAP00000002866"/>
<dbReference type="GeneID" id="533481"/>
<dbReference type="KEGG" id="bta:533481"/>
<dbReference type="CTD" id="6898"/>
<dbReference type="VEuPathDB" id="HostDB:ENSBTAG00000002214"/>
<dbReference type="eggNOG" id="KOG0259">
    <property type="taxonomic scope" value="Eukaryota"/>
</dbReference>
<dbReference type="InParanoid" id="Q58CZ9"/>
<dbReference type="OrthoDB" id="7042322at2759"/>
<dbReference type="Reactome" id="R-BTA-8963684">
    <property type="pathway name" value="Tyrosine catabolism"/>
</dbReference>
<dbReference type="UniPathway" id="UPA00139">
    <property type="reaction ID" value="UER00338"/>
</dbReference>
<dbReference type="Proteomes" id="UP000009136">
    <property type="component" value="Chromosome 18"/>
</dbReference>
<dbReference type="Bgee" id="ENSBTAG00000002214">
    <property type="expression patterns" value="Expressed in liver and 87 other cell types or tissues"/>
</dbReference>
<dbReference type="GO" id="GO:0005739">
    <property type="term" value="C:mitochondrion"/>
    <property type="evidence" value="ECO:0000250"/>
    <property type="project" value="AgBase"/>
</dbReference>
<dbReference type="GO" id="GO:0016597">
    <property type="term" value="F:amino acid binding"/>
    <property type="evidence" value="ECO:0000250"/>
    <property type="project" value="AgBase"/>
</dbReference>
<dbReference type="GO" id="GO:0004838">
    <property type="term" value="F:L-tyrosine-2-oxoglutarate transaminase activity"/>
    <property type="evidence" value="ECO:0000250"/>
    <property type="project" value="UniProtKB"/>
</dbReference>
<dbReference type="GO" id="GO:0030170">
    <property type="term" value="F:pyridoxal phosphate binding"/>
    <property type="evidence" value="ECO:0007669"/>
    <property type="project" value="InterPro"/>
</dbReference>
<dbReference type="GO" id="GO:0006520">
    <property type="term" value="P:amino acid metabolic process"/>
    <property type="evidence" value="ECO:0000250"/>
    <property type="project" value="AgBase"/>
</dbReference>
<dbReference type="GO" id="GO:0009058">
    <property type="term" value="P:biosynthetic process"/>
    <property type="evidence" value="ECO:0007669"/>
    <property type="project" value="InterPro"/>
</dbReference>
<dbReference type="GO" id="GO:0006536">
    <property type="term" value="P:glutamate metabolic process"/>
    <property type="evidence" value="ECO:0000250"/>
    <property type="project" value="UniProtKB"/>
</dbReference>
<dbReference type="GO" id="GO:0006559">
    <property type="term" value="P:L-phenylalanine catabolic process"/>
    <property type="evidence" value="ECO:0000318"/>
    <property type="project" value="GO_Central"/>
</dbReference>
<dbReference type="GO" id="GO:0006572">
    <property type="term" value="P:tyrosine catabolic process"/>
    <property type="evidence" value="ECO:0000250"/>
    <property type="project" value="UniProtKB"/>
</dbReference>
<dbReference type="CDD" id="cd00609">
    <property type="entry name" value="AAT_like"/>
    <property type="match status" value="1"/>
</dbReference>
<dbReference type="FunFam" id="3.90.1150.10:FF:000040">
    <property type="entry name" value="Tyrosine aminotransferase"/>
    <property type="match status" value="1"/>
</dbReference>
<dbReference type="FunFam" id="3.40.640.10:FF:000048">
    <property type="entry name" value="tyrosine aminotransferase"/>
    <property type="match status" value="1"/>
</dbReference>
<dbReference type="Gene3D" id="3.90.1150.10">
    <property type="entry name" value="Aspartate Aminotransferase, domain 1"/>
    <property type="match status" value="1"/>
</dbReference>
<dbReference type="Gene3D" id="3.40.640.10">
    <property type="entry name" value="Type I PLP-dependent aspartate aminotransferase-like (Major domain)"/>
    <property type="match status" value="1"/>
</dbReference>
<dbReference type="InterPro" id="IPR004839">
    <property type="entry name" value="Aminotransferase_I/II_large"/>
</dbReference>
<dbReference type="InterPro" id="IPR004838">
    <property type="entry name" value="NHTrfase_class1_PyrdxlP-BS"/>
</dbReference>
<dbReference type="InterPro" id="IPR015424">
    <property type="entry name" value="PyrdxlP-dep_Trfase"/>
</dbReference>
<dbReference type="InterPro" id="IPR015421">
    <property type="entry name" value="PyrdxlP-dep_Trfase_major"/>
</dbReference>
<dbReference type="InterPro" id="IPR015422">
    <property type="entry name" value="PyrdxlP-dep_Trfase_small"/>
</dbReference>
<dbReference type="InterPro" id="IPR011715">
    <property type="entry name" value="Tyr_aminoTrfase_ubiquitination"/>
</dbReference>
<dbReference type="InterPro" id="IPR005958">
    <property type="entry name" value="TyrNic_aminoTrfase"/>
</dbReference>
<dbReference type="InterPro" id="IPR005957">
    <property type="entry name" value="Tyrosine_aminoTrfase"/>
</dbReference>
<dbReference type="NCBIfam" id="TIGR01264">
    <property type="entry name" value="tyr_amTase_E"/>
    <property type="match status" value="1"/>
</dbReference>
<dbReference type="NCBIfam" id="TIGR01265">
    <property type="entry name" value="tyr_nico_aTase"/>
    <property type="match status" value="1"/>
</dbReference>
<dbReference type="PANTHER" id="PTHR45744">
    <property type="entry name" value="TYROSINE AMINOTRANSFERASE"/>
    <property type="match status" value="1"/>
</dbReference>
<dbReference type="PANTHER" id="PTHR45744:SF2">
    <property type="entry name" value="TYROSINE AMINOTRANSFERASE"/>
    <property type="match status" value="1"/>
</dbReference>
<dbReference type="Pfam" id="PF00155">
    <property type="entry name" value="Aminotran_1_2"/>
    <property type="match status" value="1"/>
</dbReference>
<dbReference type="Pfam" id="PF07706">
    <property type="entry name" value="TAT_ubiq"/>
    <property type="match status" value="1"/>
</dbReference>
<dbReference type="PIRSF" id="PIRSF000517">
    <property type="entry name" value="Tyr_transaminase"/>
    <property type="match status" value="1"/>
</dbReference>
<dbReference type="SUPFAM" id="SSF53383">
    <property type="entry name" value="PLP-dependent transferases"/>
    <property type="match status" value="1"/>
</dbReference>
<dbReference type="PROSITE" id="PS00105">
    <property type="entry name" value="AA_TRANSFER_CLASS_1"/>
    <property type="match status" value="1"/>
</dbReference>
<accession>Q58CZ9</accession>
<proteinExistence type="evidence at transcript level"/>
<evidence type="ECO:0000250" key="1"/>
<evidence type="ECO:0000250" key="2">
    <source>
        <dbReference type="UniProtKB" id="P17735"/>
    </source>
</evidence>
<evidence type="ECO:0000305" key="3"/>
<organism>
    <name type="scientific">Bos taurus</name>
    <name type="common">Bovine</name>
    <dbReference type="NCBI Taxonomy" id="9913"/>
    <lineage>
        <taxon>Eukaryota</taxon>
        <taxon>Metazoa</taxon>
        <taxon>Chordata</taxon>
        <taxon>Craniata</taxon>
        <taxon>Vertebrata</taxon>
        <taxon>Euteleostomi</taxon>
        <taxon>Mammalia</taxon>
        <taxon>Eutheria</taxon>
        <taxon>Laurasiatheria</taxon>
        <taxon>Artiodactyla</taxon>
        <taxon>Ruminantia</taxon>
        <taxon>Pecora</taxon>
        <taxon>Bovidae</taxon>
        <taxon>Bovinae</taxon>
        <taxon>Bos</taxon>
    </lineage>
</organism>
<protein>
    <recommendedName>
        <fullName>Tyrosine aminotransferase</fullName>
        <shortName>TAT</shortName>
        <ecNumber>2.6.1.5</ecNumber>
    </recommendedName>
    <alternativeName>
        <fullName>L-tyrosine:2-oxoglutarate aminotransferase</fullName>
    </alternativeName>
</protein>
<name>ATTY_BOVIN</name>
<keyword id="KW-0032">Aminotransferase</keyword>
<keyword id="KW-0585">Phenylalanine catabolism</keyword>
<keyword id="KW-0597">Phosphoprotein</keyword>
<keyword id="KW-0663">Pyridoxal phosphate</keyword>
<keyword id="KW-1185">Reference proteome</keyword>
<keyword id="KW-0808">Transferase</keyword>
<keyword id="KW-0828">Tyrosine catabolism</keyword>
<comment type="function">
    <text evidence="1">Transaminase involved in tyrosine breakdown. Converts tyrosine to p-hydroxyphenylpyruvate. Can catalyze the reverse reaction, using glutamic acid, with 2-oxoglutarate as cosubstrate (in vitro). Has much lower affinity and transaminase activity for phenylalanine (By similarity).</text>
</comment>
<comment type="catalytic activity">
    <reaction>
        <text>L-tyrosine + 2-oxoglutarate = 3-(4-hydroxyphenyl)pyruvate + L-glutamate</text>
        <dbReference type="Rhea" id="RHEA:15093"/>
        <dbReference type="ChEBI" id="CHEBI:16810"/>
        <dbReference type="ChEBI" id="CHEBI:29985"/>
        <dbReference type="ChEBI" id="CHEBI:36242"/>
        <dbReference type="ChEBI" id="CHEBI:58315"/>
        <dbReference type="EC" id="2.6.1.5"/>
    </reaction>
</comment>
<comment type="cofactor">
    <cofactor evidence="1">
        <name>pyridoxal 5'-phosphate</name>
        <dbReference type="ChEBI" id="CHEBI:597326"/>
    </cofactor>
</comment>
<comment type="pathway">
    <text>Amino-acid degradation; L-phenylalanine degradation; acetoacetate and fumarate from L-phenylalanine: step 2/6.</text>
</comment>
<comment type="subunit">
    <text evidence="1">Homodimer.</text>
</comment>
<comment type="similarity">
    <text evidence="3">Belongs to the class-I pyridoxal-phosphate-dependent aminotransferase family.</text>
</comment>
<reference key="1">
    <citation type="journal article" date="2005" name="BMC Genomics">
        <title>Characterization of 954 bovine full-CDS cDNA sequences.</title>
        <authorList>
            <person name="Harhay G.P."/>
            <person name="Sonstegard T.S."/>
            <person name="Keele J.W."/>
            <person name="Heaton M.P."/>
            <person name="Clawson M.L."/>
            <person name="Snelling W.M."/>
            <person name="Wiedmann R.T."/>
            <person name="Van Tassell C.P."/>
            <person name="Smith T.P.L."/>
        </authorList>
    </citation>
    <scope>NUCLEOTIDE SEQUENCE [LARGE SCALE MRNA]</scope>
</reference>
<sequence length="447" mass="49691">MQDHGSLPSVLDVHVNVAGRSSVLGKVKSRKARWSVRPSDMSNKTFNPIRAIVDNMKVKPNPNKTMIALSIGDPTVFGNLPTDPEVTQAMKDALDSGKFNGYVPSIGYLSSREEVASYYHCPEAPLEAKDVILTSGCSQAIELCLAVLANPGQNILVPRPGFSLYRTLAESMGIEVKLYNLLPEKNWEIDLKQLESLIDEKTVCLIVNNPSNPCGSVFSRRHLQKILAVAARQCVPILADEIYGDMVFSDSKFEPLATLSSKVPILSCGGLAKRWLVPGWRMGWILIHDRRDIFGNEIRDGLTKLSQRILGPCTLVQGALKSILCRTPRVFYHNTLSFLKSNADLCYGALAAIPGLRPIHPSGAMYLMVGIEMEHFPEFENDVEFTEQLVAEQSVHCLPATCFEYPNFFRVVITVPEVMMLEACSRIQEFCEQHYHCAEGSQEECDK</sequence>